<comment type="function">
    <text evidence="1">Catalyzes the isomerization between 2-isopropylmalate and 3-isopropylmalate, via the formation of 2-isopropylmaleate.</text>
</comment>
<comment type="catalytic activity">
    <reaction evidence="1">
        <text>(2R,3S)-3-isopropylmalate = (2S)-2-isopropylmalate</text>
        <dbReference type="Rhea" id="RHEA:32287"/>
        <dbReference type="ChEBI" id="CHEBI:1178"/>
        <dbReference type="ChEBI" id="CHEBI:35121"/>
        <dbReference type="EC" id="4.2.1.33"/>
    </reaction>
</comment>
<comment type="pathway">
    <text evidence="1">Amino-acid biosynthesis; L-leucine biosynthesis; L-leucine from 3-methyl-2-oxobutanoate: step 2/4.</text>
</comment>
<comment type="subunit">
    <text evidence="1">Heterodimer of LeuC and LeuD.</text>
</comment>
<comment type="similarity">
    <text evidence="1">Belongs to the LeuD family. LeuD type 1 subfamily.</text>
</comment>
<sequence>MSGFKQHTGLVVPLDAANVDTDAIIPKQFLQKVSRLGFGKHLFHDWRFLDDVGEQPNPEFVMNAPRYQGASILLARENFGCGSSREHAPWALADYGIKAMIAPSFADIFYGNSINNQMVPVRLTEQEVDEIFQFVEANEGAEVEVDLEANVVRANGKEYGFEIDSFRRHCLLNGLDNIGLTLQHEDKIAEYEANIPSFLS</sequence>
<accession>A7MWB9</accession>
<reference key="1">
    <citation type="submission" date="2007-08" db="EMBL/GenBank/DDBJ databases">
        <authorList>
            <consortium name="The Vibrio harveyi Genome Sequencing Project"/>
            <person name="Bassler B."/>
            <person name="Clifton S.W."/>
            <person name="Fulton L."/>
            <person name="Delehaunty K."/>
            <person name="Fronick C."/>
            <person name="Harrison M."/>
            <person name="Markivic C."/>
            <person name="Fulton R."/>
            <person name="Tin-Wollam A.-M."/>
            <person name="Shah N."/>
            <person name="Pepin K."/>
            <person name="Nash W."/>
            <person name="Thiruvilangam P."/>
            <person name="Bhonagiri V."/>
            <person name="Waters C."/>
            <person name="Tu K.C."/>
            <person name="Irgon J."/>
            <person name="Wilson R.K."/>
        </authorList>
    </citation>
    <scope>NUCLEOTIDE SEQUENCE [LARGE SCALE GENOMIC DNA]</scope>
    <source>
        <strain>ATCC BAA-1116 / BB120</strain>
    </source>
</reference>
<gene>
    <name evidence="1" type="primary">leuD</name>
    <name type="ordered locus">VIBHAR_00814</name>
</gene>
<name>LEUD_VIBC1</name>
<protein>
    <recommendedName>
        <fullName evidence="1">3-isopropylmalate dehydratase small subunit</fullName>
        <ecNumber evidence="1">4.2.1.33</ecNumber>
    </recommendedName>
    <alternativeName>
        <fullName evidence="1">Alpha-IPM isomerase</fullName>
        <shortName evidence="1">IPMI</shortName>
    </alternativeName>
    <alternativeName>
        <fullName evidence="1">Isopropylmalate isomerase</fullName>
    </alternativeName>
</protein>
<keyword id="KW-0028">Amino-acid biosynthesis</keyword>
<keyword id="KW-0100">Branched-chain amino acid biosynthesis</keyword>
<keyword id="KW-0432">Leucine biosynthesis</keyword>
<keyword id="KW-0456">Lyase</keyword>
<proteinExistence type="inferred from homology"/>
<evidence type="ECO:0000255" key="1">
    <source>
        <dbReference type="HAMAP-Rule" id="MF_01031"/>
    </source>
</evidence>
<feature type="chain" id="PRO_1000063856" description="3-isopropylmalate dehydratase small subunit">
    <location>
        <begin position="1"/>
        <end position="200"/>
    </location>
</feature>
<dbReference type="EC" id="4.2.1.33" evidence="1"/>
<dbReference type="EMBL" id="CP000789">
    <property type="protein sequence ID" value="ABU69815.1"/>
    <property type="molecule type" value="Genomic_DNA"/>
</dbReference>
<dbReference type="RefSeq" id="WP_012126923.1">
    <property type="nucleotide sequence ID" value="NC_022269.1"/>
</dbReference>
<dbReference type="SMR" id="A7MWB9"/>
<dbReference type="KEGG" id="vha:VIBHAR_00814"/>
<dbReference type="PATRIC" id="fig|338187.25.peg.1801"/>
<dbReference type="UniPathway" id="UPA00048">
    <property type="reaction ID" value="UER00071"/>
</dbReference>
<dbReference type="Proteomes" id="UP000008152">
    <property type="component" value="Chromosome I"/>
</dbReference>
<dbReference type="GO" id="GO:0009316">
    <property type="term" value="C:3-isopropylmalate dehydratase complex"/>
    <property type="evidence" value="ECO:0007669"/>
    <property type="project" value="InterPro"/>
</dbReference>
<dbReference type="GO" id="GO:0003861">
    <property type="term" value="F:3-isopropylmalate dehydratase activity"/>
    <property type="evidence" value="ECO:0007669"/>
    <property type="project" value="UniProtKB-UniRule"/>
</dbReference>
<dbReference type="GO" id="GO:0009098">
    <property type="term" value="P:L-leucine biosynthetic process"/>
    <property type="evidence" value="ECO:0007669"/>
    <property type="project" value="UniProtKB-UniRule"/>
</dbReference>
<dbReference type="CDD" id="cd01577">
    <property type="entry name" value="IPMI_Swivel"/>
    <property type="match status" value="1"/>
</dbReference>
<dbReference type="FunFam" id="3.20.19.10:FF:000003">
    <property type="entry name" value="3-isopropylmalate dehydratase small subunit"/>
    <property type="match status" value="1"/>
</dbReference>
<dbReference type="Gene3D" id="3.20.19.10">
    <property type="entry name" value="Aconitase, domain 4"/>
    <property type="match status" value="1"/>
</dbReference>
<dbReference type="HAMAP" id="MF_01031">
    <property type="entry name" value="LeuD_type1"/>
    <property type="match status" value="1"/>
</dbReference>
<dbReference type="InterPro" id="IPR004431">
    <property type="entry name" value="3-IsopropMal_deHydase_ssu"/>
</dbReference>
<dbReference type="InterPro" id="IPR015928">
    <property type="entry name" value="Aconitase/3IPM_dehydase_swvl"/>
</dbReference>
<dbReference type="InterPro" id="IPR000573">
    <property type="entry name" value="AconitaseA/IPMdHydase_ssu_swvl"/>
</dbReference>
<dbReference type="InterPro" id="IPR033940">
    <property type="entry name" value="IPMI_Swivel"/>
</dbReference>
<dbReference type="InterPro" id="IPR050075">
    <property type="entry name" value="LeuD"/>
</dbReference>
<dbReference type="NCBIfam" id="TIGR00171">
    <property type="entry name" value="leuD"/>
    <property type="match status" value="1"/>
</dbReference>
<dbReference type="NCBIfam" id="NF002458">
    <property type="entry name" value="PRK01641.1"/>
    <property type="match status" value="1"/>
</dbReference>
<dbReference type="PANTHER" id="PTHR43345:SF5">
    <property type="entry name" value="3-ISOPROPYLMALATE DEHYDRATASE SMALL SUBUNIT"/>
    <property type="match status" value="1"/>
</dbReference>
<dbReference type="PANTHER" id="PTHR43345">
    <property type="entry name" value="3-ISOPROPYLMALATE DEHYDRATASE SMALL SUBUNIT 2-RELATED-RELATED"/>
    <property type="match status" value="1"/>
</dbReference>
<dbReference type="Pfam" id="PF00694">
    <property type="entry name" value="Aconitase_C"/>
    <property type="match status" value="1"/>
</dbReference>
<dbReference type="SUPFAM" id="SSF52016">
    <property type="entry name" value="LeuD/IlvD-like"/>
    <property type="match status" value="1"/>
</dbReference>
<organism>
    <name type="scientific">Vibrio campbellii (strain ATCC BAA-1116)</name>
    <dbReference type="NCBI Taxonomy" id="2902295"/>
    <lineage>
        <taxon>Bacteria</taxon>
        <taxon>Pseudomonadati</taxon>
        <taxon>Pseudomonadota</taxon>
        <taxon>Gammaproteobacteria</taxon>
        <taxon>Vibrionales</taxon>
        <taxon>Vibrionaceae</taxon>
        <taxon>Vibrio</taxon>
    </lineage>
</organism>